<keyword id="KW-0240">DNA-directed RNA polymerase</keyword>
<keyword id="KW-0548">Nucleotidyltransferase</keyword>
<keyword id="KW-0804">Transcription</keyword>
<keyword id="KW-0808">Transferase</keyword>
<name>RPOB_METPB</name>
<feature type="chain" id="PRO_1000141711" description="DNA-directed RNA polymerase subunit beta">
    <location>
        <begin position="1"/>
        <end position="1375"/>
    </location>
</feature>
<comment type="function">
    <text evidence="1">DNA-dependent RNA polymerase catalyzes the transcription of DNA into RNA using the four ribonucleoside triphosphates as substrates.</text>
</comment>
<comment type="catalytic activity">
    <reaction evidence="1">
        <text>RNA(n) + a ribonucleoside 5'-triphosphate = RNA(n+1) + diphosphate</text>
        <dbReference type="Rhea" id="RHEA:21248"/>
        <dbReference type="Rhea" id="RHEA-COMP:14527"/>
        <dbReference type="Rhea" id="RHEA-COMP:17342"/>
        <dbReference type="ChEBI" id="CHEBI:33019"/>
        <dbReference type="ChEBI" id="CHEBI:61557"/>
        <dbReference type="ChEBI" id="CHEBI:140395"/>
        <dbReference type="EC" id="2.7.7.6"/>
    </reaction>
</comment>
<comment type="subunit">
    <text evidence="1">The RNAP catalytic core consists of 2 alpha, 1 beta, 1 beta' and 1 omega subunit. When a sigma factor is associated with the core the holoenzyme is formed, which can initiate transcription.</text>
</comment>
<comment type="similarity">
    <text evidence="1">Belongs to the RNA polymerase beta chain family.</text>
</comment>
<evidence type="ECO:0000255" key="1">
    <source>
        <dbReference type="HAMAP-Rule" id="MF_01321"/>
    </source>
</evidence>
<protein>
    <recommendedName>
        <fullName evidence="1">DNA-directed RNA polymerase subunit beta</fullName>
        <shortName evidence="1">RNAP subunit beta</shortName>
        <ecNumber evidence="1">2.7.7.6</ecNumber>
    </recommendedName>
    <alternativeName>
        <fullName evidence="1">RNA polymerase subunit beta</fullName>
    </alternativeName>
    <alternativeName>
        <fullName evidence="1">Transcriptase subunit beta</fullName>
    </alternativeName>
</protein>
<proteinExistence type="inferred from homology"/>
<dbReference type="EC" id="2.7.7.6" evidence="1"/>
<dbReference type="EMBL" id="CP001029">
    <property type="protein sequence ID" value="ACB82598.1"/>
    <property type="molecule type" value="Genomic_DNA"/>
</dbReference>
<dbReference type="RefSeq" id="WP_012456202.1">
    <property type="nucleotide sequence ID" value="NC_010725.1"/>
</dbReference>
<dbReference type="SMR" id="B1ZGS0"/>
<dbReference type="STRING" id="441620.Mpop_4499"/>
<dbReference type="KEGG" id="mpo:Mpop_4499"/>
<dbReference type="eggNOG" id="COG0085">
    <property type="taxonomic scope" value="Bacteria"/>
</dbReference>
<dbReference type="HOGENOM" id="CLU_000524_4_0_5"/>
<dbReference type="OrthoDB" id="9803954at2"/>
<dbReference type="Proteomes" id="UP000007136">
    <property type="component" value="Chromosome"/>
</dbReference>
<dbReference type="GO" id="GO:0000428">
    <property type="term" value="C:DNA-directed RNA polymerase complex"/>
    <property type="evidence" value="ECO:0007669"/>
    <property type="project" value="UniProtKB-KW"/>
</dbReference>
<dbReference type="GO" id="GO:0003677">
    <property type="term" value="F:DNA binding"/>
    <property type="evidence" value="ECO:0007669"/>
    <property type="project" value="UniProtKB-UniRule"/>
</dbReference>
<dbReference type="GO" id="GO:0003899">
    <property type="term" value="F:DNA-directed RNA polymerase activity"/>
    <property type="evidence" value="ECO:0007669"/>
    <property type="project" value="UniProtKB-UniRule"/>
</dbReference>
<dbReference type="GO" id="GO:0032549">
    <property type="term" value="F:ribonucleoside binding"/>
    <property type="evidence" value="ECO:0007669"/>
    <property type="project" value="InterPro"/>
</dbReference>
<dbReference type="GO" id="GO:0006351">
    <property type="term" value="P:DNA-templated transcription"/>
    <property type="evidence" value="ECO:0007669"/>
    <property type="project" value="UniProtKB-UniRule"/>
</dbReference>
<dbReference type="CDD" id="cd00653">
    <property type="entry name" value="RNA_pol_B_RPB2"/>
    <property type="match status" value="1"/>
</dbReference>
<dbReference type="FunFam" id="3.90.1800.10:FF:000001">
    <property type="entry name" value="DNA-directed RNA polymerase subunit beta"/>
    <property type="match status" value="1"/>
</dbReference>
<dbReference type="Gene3D" id="2.40.50.100">
    <property type="match status" value="1"/>
</dbReference>
<dbReference type="Gene3D" id="2.40.50.150">
    <property type="match status" value="1"/>
</dbReference>
<dbReference type="Gene3D" id="3.90.1100.10">
    <property type="match status" value="2"/>
</dbReference>
<dbReference type="Gene3D" id="2.30.150.10">
    <property type="entry name" value="DNA-directed RNA polymerase, beta subunit, external 1 domain"/>
    <property type="match status" value="1"/>
</dbReference>
<dbReference type="Gene3D" id="2.40.270.10">
    <property type="entry name" value="DNA-directed RNA polymerase, subunit 2, domain 6"/>
    <property type="match status" value="1"/>
</dbReference>
<dbReference type="Gene3D" id="3.90.1800.10">
    <property type="entry name" value="RNA polymerase alpha subunit dimerisation domain"/>
    <property type="match status" value="1"/>
</dbReference>
<dbReference type="Gene3D" id="3.90.1110.10">
    <property type="entry name" value="RNA polymerase Rpb2, domain 2"/>
    <property type="match status" value="1"/>
</dbReference>
<dbReference type="HAMAP" id="MF_01321">
    <property type="entry name" value="RNApol_bact_RpoB"/>
    <property type="match status" value="1"/>
</dbReference>
<dbReference type="InterPro" id="IPR042107">
    <property type="entry name" value="DNA-dir_RNA_pol_bsu_ext_1_sf"/>
</dbReference>
<dbReference type="InterPro" id="IPR019462">
    <property type="entry name" value="DNA-dir_RNA_pol_bsu_external_1"/>
</dbReference>
<dbReference type="InterPro" id="IPR015712">
    <property type="entry name" value="DNA-dir_RNA_pol_su2"/>
</dbReference>
<dbReference type="InterPro" id="IPR007120">
    <property type="entry name" value="DNA-dir_RNAP_su2_dom"/>
</dbReference>
<dbReference type="InterPro" id="IPR037033">
    <property type="entry name" value="DNA-dir_RNAP_su2_hyb_sf"/>
</dbReference>
<dbReference type="InterPro" id="IPR010243">
    <property type="entry name" value="RNA_pol_bsu_bac"/>
</dbReference>
<dbReference type="InterPro" id="IPR007121">
    <property type="entry name" value="RNA_pol_bsu_CS"/>
</dbReference>
<dbReference type="InterPro" id="IPR007644">
    <property type="entry name" value="RNA_pol_bsu_protrusion"/>
</dbReference>
<dbReference type="InterPro" id="IPR007642">
    <property type="entry name" value="RNA_pol_Rpb2_2"/>
</dbReference>
<dbReference type="InterPro" id="IPR037034">
    <property type="entry name" value="RNA_pol_Rpb2_2_sf"/>
</dbReference>
<dbReference type="InterPro" id="IPR007645">
    <property type="entry name" value="RNA_pol_Rpb2_3"/>
</dbReference>
<dbReference type="InterPro" id="IPR007641">
    <property type="entry name" value="RNA_pol_Rpb2_7"/>
</dbReference>
<dbReference type="InterPro" id="IPR014724">
    <property type="entry name" value="RNA_pol_RPB2_OB-fold"/>
</dbReference>
<dbReference type="NCBIfam" id="NF001616">
    <property type="entry name" value="PRK00405.1"/>
    <property type="match status" value="1"/>
</dbReference>
<dbReference type="NCBIfam" id="TIGR02013">
    <property type="entry name" value="rpoB"/>
    <property type="match status" value="1"/>
</dbReference>
<dbReference type="PANTHER" id="PTHR20856">
    <property type="entry name" value="DNA-DIRECTED RNA POLYMERASE I SUBUNIT 2"/>
    <property type="match status" value="1"/>
</dbReference>
<dbReference type="Pfam" id="PF04563">
    <property type="entry name" value="RNA_pol_Rpb2_1"/>
    <property type="match status" value="1"/>
</dbReference>
<dbReference type="Pfam" id="PF04561">
    <property type="entry name" value="RNA_pol_Rpb2_2"/>
    <property type="match status" value="2"/>
</dbReference>
<dbReference type="Pfam" id="PF04565">
    <property type="entry name" value="RNA_pol_Rpb2_3"/>
    <property type="match status" value="1"/>
</dbReference>
<dbReference type="Pfam" id="PF10385">
    <property type="entry name" value="RNA_pol_Rpb2_45"/>
    <property type="match status" value="1"/>
</dbReference>
<dbReference type="Pfam" id="PF00562">
    <property type="entry name" value="RNA_pol_Rpb2_6"/>
    <property type="match status" value="1"/>
</dbReference>
<dbReference type="Pfam" id="PF04560">
    <property type="entry name" value="RNA_pol_Rpb2_7"/>
    <property type="match status" value="1"/>
</dbReference>
<dbReference type="SUPFAM" id="SSF64484">
    <property type="entry name" value="beta and beta-prime subunits of DNA dependent RNA-polymerase"/>
    <property type="match status" value="1"/>
</dbReference>
<dbReference type="PROSITE" id="PS01166">
    <property type="entry name" value="RNA_POL_BETA"/>
    <property type="match status" value="1"/>
</dbReference>
<reference key="1">
    <citation type="submission" date="2008-04" db="EMBL/GenBank/DDBJ databases">
        <title>Complete sequence of chromosome of Methylobacterium populi BJ001.</title>
        <authorList>
            <consortium name="US DOE Joint Genome Institute"/>
            <person name="Copeland A."/>
            <person name="Lucas S."/>
            <person name="Lapidus A."/>
            <person name="Glavina del Rio T."/>
            <person name="Dalin E."/>
            <person name="Tice H."/>
            <person name="Bruce D."/>
            <person name="Goodwin L."/>
            <person name="Pitluck S."/>
            <person name="Chertkov O."/>
            <person name="Brettin T."/>
            <person name="Detter J.C."/>
            <person name="Han C."/>
            <person name="Kuske C.R."/>
            <person name="Schmutz J."/>
            <person name="Larimer F."/>
            <person name="Land M."/>
            <person name="Hauser L."/>
            <person name="Kyrpides N."/>
            <person name="Mikhailova N."/>
            <person name="Marx C."/>
            <person name="Richardson P."/>
        </authorList>
    </citation>
    <scope>NUCLEOTIDE SEQUENCE [LARGE SCALE GENOMIC DNA]</scope>
    <source>
        <strain>ATCC BAA-705 / NCIMB 13946 / BJ001</strain>
    </source>
</reference>
<gene>
    <name evidence="1" type="primary">rpoB</name>
    <name type="ordered locus">Mpop_4499</name>
</gene>
<accession>B1ZGS0</accession>
<sequence length="1375" mass="152750">MANTLVGRKRIRKFFGKIREVAEMPNLIEVQKASYDQFLMVDEPEGGRADEGLQSVFKSVFPISDFASTALLEFVRYTFEQPKYDVDECRQRGITFAAPLKVTLRLIVFDVDPDTGAKSVKDIKEQDVYMGDMPLMTDNGTFIVNGTERVIVSQMHRSPGVFFDHDKGKTHSSGKLLFAARIIPYRGSWLDVEFDAKDIVHVRIDRKRKLPVTSLLFALGLDGEEILSTFYNRVSYERDGADWRVPFDAERLKGFKASVDLIDADSGEVVLEAGKKLNARNARLIGEKGTKFLKATDEDLVGQYIAEDLVNAKTGEIWAEAGDEISEKLLKALDDVGVTEIPVLDIDHVNVGPYIRNTLAVDKNSAREGALFDIYRVMRPGEPPTLDTAEAMFHSLFFDAERYDLSAVGRVKMNMRLDLDAADTVRTLRREDMLAVVKALVDLRDGKGEIDDIDHLGNRRVRSVGELMENQYRLGLLRMERAIKERMSSVDIDTVMPQDLINAKPAAAAVREFFGSSQLSQFMDQTNPLSEVTHKRRLSALGPGGLTRERAGFEVRDVHPTHYGRICPIETPEGPNIGLINSLATFARVNKYGFIETPFRRVKDGVVTDEVAYLSAMEEAKYYVAQANAGMDAARKLTDDLVVCRRAGEVIVVAPDRVDLMDVSPKQLVSVAAALIPFLENDDANRALMGSNMQRQAVPLVRADAPFVGTGMEAVVARDSGAAIAARRSGIVDQVDATRIVIRATEETDPTKPGVDIYRLQKFQRSNQSTCITQKPLVRVGEPVKKGEIIADGPSTEFGELALGRNVLVAFMPWNGYNFEDSILLSERIVKDDVFTSIHIEEFEVMARDTKLGPEEITRDIPNVSEEALKNLDEAGIVYIGAEVHAGDILVGKITPKGESPMTPEEKLLRAIFGEKASDVRDTSLRVPPGVTGTIVEVRVFNRHGVDKDERAQAIEREEIERLAKDRDDEQTILDRNTYARLAEVLIGQSPIAGPKGFRKDTTLTREGISEYPRSQWWQFAVVDDRLMTEIEAMQKQYDESKKRLEQRFLDKVEKLQRGDELPPGVMKMVKVFVAVKRKIQPGDKMAGRHGNKGVVSRIVPIEDMPFLEDGTHADIVLNPLGVPSRMNVGQILETHLGWAAAGLGRKVSKAVDAYLKNQDIAPLRAEMEAIYSPSELEGLSDEALAEAGNNVRRGVPMATPVFNGAKEADIETMLEMAGLDRSAQSTLYDGRTGEPFDRKVTMGYIYMLKLHHLVDDKIHARSIGPYSLVTQQPLGGKAQFGGQRFGEMEVWALEAYGAAYTLQEMLTVKSDDVAGRTKVYEAIVRGDDTFEAGIPESFNVLVKEMRSLGLNVELTNSKQQAANDQIEPPADAAE</sequence>
<organism>
    <name type="scientific">Methylorubrum populi (strain ATCC BAA-705 / NCIMB 13946 / BJ001)</name>
    <name type="common">Methylobacterium populi</name>
    <dbReference type="NCBI Taxonomy" id="441620"/>
    <lineage>
        <taxon>Bacteria</taxon>
        <taxon>Pseudomonadati</taxon>
        <taxon>Pseudomonadota</taxon>
        <taxon>Alphaproteobacteria</taxon>
        <taxon>Hyphomicrobiales</taxon>
        <taxon>Methylobacteriaceae</taxon>
        <taxon>Methylorubrum</taxon>
    </lineage>
</organism>